<proteinExistence type="inferred from homology"/>
<accession>Q6ELW1</accession>
<reference key="1">
    <citation type="journal article" date="2004" name="Syst. Biol.">
        <title>A molecular supermatrix of the rabbits and hares (Leporidae) allows for the identification of five intercontinental exchanges during the Miocene.</title>
        <authorList>
            <person name="Matthee C.A."/>
            <person name="van Vuuren B.J."/>
            <person name="Bell D."/>
            <person name="Robinson T.J."/>
        </authorList>
    </citation>
    <scope>NUCLEOTIDE SEQUENCE [GENOMIC DNA]</scope>
</reference>
<dbReference type="EMBL" id="AY292723">
    <property type="protein sequence ID" value="AAS54919.1"/>
    <property type="molecule type" value="Genomic_DNA"/>
</dbReference>
<dbReference type="SMR" id="Q6ELW1"/>
<dbReference type="GO" id="GO:0005743">
    <property type="term" value="C:mitochondrial inner membrane"/>
    <property type="evidence" value="ECO:0007669"/>
    <property type="project" value="UniProtKB-SubCell"/>
</dbReference>
<dbReference type="GO" id="GO:0045275">
    <property type="term" value="C:respiratory chain complex III"/>
    <property type="evidence" value="ECO:0007669"/>
    <property type="project" value="InterPro"/>
</dbReference>
<dbReference type="GO" id="GO:0046872">
    <property type="term" value="F:metal ion binding"/>
    <property type="evidence" value="ECO:0007669"/>
    <property type="project" value="UniProtKB-KW"/>
</dbReference>
<dbReference type="GO" id="GO:0008121">
    <property type="term" value="F:ubiquinol-cytochrome-c reductase activity"/>
    <property type="evidence" value="ECO:0007669"/>
    <property type="project" value="InterPro"/>
</dbReference>
<dbReference type="GO" id="GO:0006122">
    <property type="term" value="P:mitochondrial electron transport, ubiquinol to cytochrome c"/>
    <property type="evidence" value="ECO:0007669"/>
    <property type="project" value="TreeGrafter"/>
</dbReference>
<dbReference type="CDD" id="cd00290">
    <property type="entry name" value="cytochrome_b_C"/>
    <property type="match status" value="1"/>
</dbReference>
<dbReference type="CDD" id="cd00284">
    <property type="entry name" value="Cytochrome_b_N"/>
    <property type="match status" value="1"/>
</dbReference>
<dbReference type="FunFam" id="1.20.810.10:FF:000002">
    <property type="entry name" value="Cytochrome b"/>
    <property type="match status" value="1"/>
</dbReference>
<dbReference type="Gene3D" id="1.20.810.10">
    <property type="entry name" value="Cytochrome Bc1 Complex, Chain C"/>
    <property type="match status" value="1"/>
</dbReference>
<dbReference type="InterPro" id="IPR005798">
    <property type="entry name" value="Cyt_b/b6_C"/>
</dbReference>
<dbReference type="InterPro" id="IPR036150">
    <property type="entry name" value="Cyt_b/b6_C_sf"/>
</dbReference>
<dbReference type="InterPro" id="IPR005797">
    <property type="entry name" value="Cyt_b/b6_N"/>
</dbReference>
<dbReference type="InterPro" id="IPR027387">
    <property type="entry name" value="Cytb/b6-like_sf"/>
</dbReference>
<dbReference type="InterPro" id="IPR030689">
    <property type="entry name" value="Cytochrome_b"/>
</dbReference>
<dbReference type="InterPro" id="IPR048260">
    <property type="entry name" value="Cytochrome_b_C_euk/bac"/>
</dbReference>
<dbReference type="InterPro" id="IPR048259">
    <property type="entry name" value="Cytochrome_b_N_euk/bac"/>
</dbReference>
<dbReference type="InterPro" id="IPR016174">
    <property type="entry name" value="Di-haem_cyt_TM"/>
</dbReference>
<dbReference type="PANTHER" id="PTHR19271">
    <property type="entry name" value="CYTOCHROME B"/>
    <property type="match status" value="1"/>
</dbReference>
<dbReference type="PANTHER" id="PTHR19271:SF16">
    <property type="entry name" value="CYTOCHROME B"/>
    <property type="match status" value="1"/>
</dbReference>
<dbReference type="Pfam" id="PF00032">
    <property type="entry name" value="Cytochrom_B_C"/>
    <property type="match status" value="1"/>
</dbReference>
<dbReference type="Pfam" id="PF00033">
    <property type="entry name" value="Cytochrome_B"/>
    <property type="match status" value="1"/>
</dbReference>
<dbReference type="PIRSF" id="PIRSF038885">
    <property type="entry name" value="COB"/>
    <property type="match status" value="1"/>
</dbReference>
<dbReference type="SUPFAM" id="SSF81648">
    <property type="entry name" value="a domain/subunit of cytochrome bc1 complex (Ubiquinol-cytochrome c reductase)"/>
    <property type="match status" value="1"/>
</dbReference>
<dbReference type="SUPFAM" id="SSF81342">
    <property type="entry name" value="Transmembrane di-heme cytochromes"/>
    <property type="match status" value="1"/>
</dbReference>
<dbReference type="PROSITE" id="PS51003">
    <property type="entry name" value="CYTB_CTER"/>
    <property type="match status" value="1"/>
</dbReference>
<dbReference type="PROSITE" id="PS51002">
    <property type="entry name" value="CYTB_NTER"/>
    <property type="match status" value="1"/>
</dbReference>
<name>CYB_SYLNU</name>
<feature type="chain" id="PRO_0000061627" description="Cytochrome b">
    <location>
        <begin position="1"/>
        <end position="379"/>
    </location>
</feature>
<feature type="transmembrane region" description="Helical" evidence="2">
    <location>
        <begin position="33"/>
        <end position="53"/>
    </location>
</feature>
<feature type="transmembrane region" description="Helical" evidence="2">
    <location>
        <begin position="77"/>
        <end position="98"/>
    </location>
</feature>
<feature type="transmembrane region" description="Helical" evidence="2">
    <location>
        <begin position="113"/>
        <end position="133"/>
    </location>
</feature>
<feature type="transmembrane region" description="Helical" evidence="2">
    <location>
        <begin position="178"/>
        <end position="198"/>
    </location>
</feature>
<feature type="transmembrane region" description="Helical" evidence="2">
    <location>
        <begin position="226"/>
        <end position="246"/>
    </location>
</feature>
<feature type="transmembrane region" description="Helical" evidence="2">
    <location>
        <begin position="288"/>
        <end position="308"/>
    </location>
</feature>
<feature type="transmembrane region" description="Helical" evidence="2">
    <location>
        <begin position="320"/>
        <end position="340"/>
    </location>
</feature>
<feature type="transmembrane region" description="Helical" evidence="2">
    <location>
        <begin position="347"/>
        <end position="367"/>
    </location>
</feature>
<feature type="binding site" description="axial binding residue" evidence="2">
    <location>
        <position position="83"/>
    </location>
    <ligand>
        <name>heme b</name>
        <dbReference type="ChEBI" id="CHEBI:60344"/>
        <label>b562</label>
    </ligand>
    <ligandPart>
        <name>Fe</name>
        <dbReference type="ChEBI" id="CHEBI:18248"/>
    </ligandPart>
</feature>
<feature type="binding site" description="axial binding residue" evidence="2">
    <location>
        <position position="97"/>
    </location>
    <ligand>
        <name>heme b</name>
        <dbReference type="ChEBI" id="CHEBI:60344"/>
        <label>b566</label>
    </ligand>
    <ligandPart>
        <name>Fe</name>
        <dbReference type="ChEBI" id="CHEBI:18248"/>
    </ligandPart>
</feature>
<feature type="binding site" description="axial binding residue" evidence="2">
    <location>
        <position position="182"/>
    </location>
    <ligand>
        <name>heme b</name>
        <dbReference type="ChEBI" id="CHEBI:60344"/>
        <label>b562</label>
    </ligand>
    <ligandPart>
        <name>Fe</name>
        <dbReference type="ChEBI" id="CHEBI:18248"/>
    </ligandPart>
</feature>
<feature type="binding site" description="axial binding residue" evidence="2">
    <location>
        <position position="196"/>
    </location>
    <ligand>
        <name>heme b</name>
        <dbReference type="ChEBI" id="CHEBI:60344"/>
        <label>b566</label>
    </ligand>
    <ligandPart>
        <name>Fe</name>
        <dbReference type="ChEBI" id="CHEBI:18248"/>
    </ligandPart>
</feature>
<feature type="binding site" evidence="2">
    <location>
        <position position="201"/>
    </location>
    <ligand>
        <name>a ubiquinone</name>
        <dbReference type="ChEBI" id="CHEBI:16389"/>
    </ligand>
</feature>
<organism>
    <name type="scientific">Sylvilagus nuttallii</name>
    <name type="common">Mountain cottontail</name>
    <name type="synonym">Lepus nuttallii</name>
    <dbReference type="NCBI Taxonomy" id="50378"/>
    <lineage>
        <taxon>Eukaryota</taxon>
        <taxon>Metazoa</taxon>
        <taxon>Chordata</taxon>
        <taxon>Craniata</taxon>
        <taxon>Vertebrata</taxon>
        <taxon>Euteleostomi</taxon>
        <taxon>Mammalia</taxon>
        <taxon>Eutheria</taxon>
        <taxon>Euarchontoglires</taxon>
        <taxon>Glires</taxon>
        <taxon>Lagomorpha</taxon>
        <taxon>Leporidae</taxon>
        <taxon>Sylvilagus</taxon>
    </lineage>
</organism>
<evidence type="ECO:0000250" key="1"/>
<evidence type="ECO:0000250" key="2">
    <source>
        <dbReference type="UniProtKB" id="P00157"/>
    </source>
</evidence>
<evidence type="ECO:0000255" key="3">
    <source>
        <dbReference type="PROSITE-ProRule" id="PRU00967"/>
    </source>
</evidence>
<evidence type="ECO:0000255" key="4">
    <source>
        <dbReference type="PROSITE-ProRule" id="PRU00968"/>
    </source>
</evidence>
<geneLocation type="mitochondrion"/>
<sequence length="379" mass="42667">MTNIRKTHPLLKIINHSLIDLPTPSNISAWWNFGSLLGLCPNNQILTGLFLAMHYTSDTLTAFSSVTHICRDVNYGWLIRYLHANGASMFFVCLYIHVGRGIYYGSYTYLETWNIGIILLFAVMATAFMGYVLPWGQMSFWGATVITNLLSAIPYIGTTLVEWIWGGFSVDKATLTRFFAFHFILPFIIAALVMVHLLFLHETGSNNPSGIPSDSDKIPFHPYYTIKDTLGFLALILLLLLLVLFSPDLLGDPDNYTPANLLNTPPHIKPEWYFLFAYAILRSIPNKLGGVLALVMSILVLAIIPLLHTSKQRSMMFRPISQVLFWVLVADLLTLTWIGGQPVEHPFITIGQVASILYFSIILILMPLASLIENKILKW</sequence>
<protein>
    <recommendedName>
        <fullName>Cytochrome b</fullName>
    </recommendedName>
    <alternativeName>
        <fullName>Complex III subunit 3</fullName>
    </alternativeName>
    <alternativeName>
        <fullName>Complex III subunit III</fullName>
    </alternativeName>
    <alternativeName>
        <fullName>Cytochrome b-c1 complex subunit 3</fullName>
    </alternativeName>
    <alternativeName>
        <fullName>Ubiquinol-cytochrome-c reductase complex cytochrome b subunit</fullName>
    </alternativeName>
</protein>
<gene>
    <name type="primary">MT-CYB</name>
    <name type="synonym">COB</name>
    <name type="synonym">CYTB</name>
    <name type="synonym">MTCYB</name>
</gene>
<comment type="function">
    <text evidence="2">Component of the ubiquinol-cytochrome c reductase complex (complex III or cytochrome b-c1 complex) that is part of the mitochondrial respiratory chain. The b-c1 complex mediates electron transfer from ubiquinol to cytochrome c. Contributes to the generation of a proton gradient across the mitochondrial membrane that is then used for ATP synthesis.</text>
</comment>
<comment type="cofactor">
    <cofactor evidence="2">
        <name>heme b</name>
        <dbReference type="ChEBI" id="CHEBI:60344"/>
    </cofactor>
    <text evidence="2">Binds 2 heme b groups non-covalently.</text>
</comment>
<comment type="subunit">
    <text evidence="2">The cytochrome bc1 complex contains 11 subunits: 3 respiratory subunits (MT-CYB, CYC1 and UQCRFS1), 2 core proteins (UQCRC1 and UQCRC2) and 6 low-molecular weight proteins (UQCRH/QCR6, UQCRB/QCR7, UQCRQ/QCR8, UQCR10/QCR9, UQCR11/QCR10 and a cleavage product of UQCRFS1). This cytochrome bc1 complex then forms a dimer.</text>
</comment>
<comment type="subcellular location">
    <subcellularLocation>
        <location evidence="2">Mitochondrion inner membrane</location>
        <topology evidence="2">Multi-pass membrane protein</topology>
    </subcellularLocation>
</comment>
<comment type="miscellaneous">
    <text evidence="1">Heme 1 (or BL or b562) is low-potential and absorbs at about 562 nm, and heme 2 (or BH or b566) is high-potential and absorbs at about 566 nm.</text>
</comment>
<comment type="similarity">
    <text evidence="3 4">Belongs to the cytochrome b family.</text>
</comment>
<comment type="caution">
    <text evidence="2">The full-length protein contains only eight transmembrane helices, not nine as predicted by bioinformatics tools.</text>
</comment>
<keyword id="KW-0249">Electron transport</keyword>
<keyword id="KW-0349">Heme</keyword>
<keyword id="KW-0408">Iron</keyword>
<keyword id="KW-0472">Membrane</keyword>
<keyword id="KW-0479">Metal-binding</keyword>
<keyword id="KW-0496">Mitochondrion</keyword>
<keyword id="KW-0999">Mitochondrion inner membrane</keyword>
<keyword id="KW-0679">Respiratory chain</keyword>
<keyword id="KW-0812">Transmembrane</keyword>
<keyword id="KW-1133">Transmembrane helix</keyword>
<keyword id="KW-0813">Transport</keyword>
<keyword id="KW-0830">Ubiquinone</keyword>